<reference key="1">
    <citation type="journal article" date="2000" name="Nature">
        <title>Sequence and analysis of chromosome 5 of the plant Arabidopsis thaliana.</title>
        <authorList>
            <person name="Tabata S."/>
            <person name="Kaneko T."/>
            <person name="Nakamura Y."/>
            <person name="Kotani H."/>
            <person name="Kato T."/>
            <person name="Asamizu E."/>
            <person name="Miyajima N."/>
            <person name="Sasamoto S."/>
            <person name="Kimura T."/>
            <person name="Hosouchi T."/>
            <person name="Kawashima K."/>
            <person name="Kohara M."/>
            <person name="Matsumoto M."/>
            <person name="Matsuno A."/>
            <person name="Muraki A."/>
            <person name="Nakayama S."/>
            <person name="Nakazaki N."/>
            <person name="Naruo K."/>
            <person name="Okumura S."/>
            <person name="Shinpo S."/>
            <person name="Takeuchi C."/>
            <person name="Wada T."/>
            <person name="Watanabe A."/>
            <person name="Yamada M."/>
            <person name="Yasuda M."/>
            <person name="Sato S."/>
            <person name="de la Bastide M."/>
            <person name="Huang E."/>
            <person name="Spiegel L."/>
            <person name="Gnoj L."/>
            <person name="O'Shaughnessy A."/>
            <person name="Preston R."/>
            <person name="Habermann K."/>
            <person name="Murray J."/>
            <person name="Johnson D."/>
            <person name="Rohlfing T."/>
            <person name="Nelson J."/>
            <person name="Stoneking T."/>
            <person name="Pepin K."/>
            <person name="Spieth J."/>
            <person name="Sekhon M."/>
            <person name="Armstrong J."/>
            <person name="Becker M."/>
            <person name="Belter E."/>
            <person name="Cordum H."/>
            <person name="Cordes M."/>
            <person name="Courtney L."/>
            <person name="Courtney W."/>
            <person name="Dante M."/>
            <person name="Du H."/>
            <person name="Edwards J."/>
            <person name="Fryman J."/>
            <person name="Haakensen B."/>
            <person name="Lamar E."/>
            <person name="Latreille P."/>
            <person name="Leonard S."/>
            <person name="Meyer R."/>
            <person name="Mulvaney E."/>
            <person name="Ozersky P."/>
            <person name="Riley A."/>
            <person name="Strowmatt C."/>
            <person name="Wagner-McPherson C."/>
            <person name="Wollam A."/>
            <person name="Yoakum M."/>
            <person name="Bell M."/>
            <person name="Dedhia N."/>
            <person name="Parnell L."/>
            <person name="Shah R."/>
            <person name="Rodriguez M."/>
            <person name="Hoon See L."/>
            <person name="Vil D."/>
            <person name="Baker J."/>
            <person name="Kirchoff K."/>
            <person name="Toth K."/>
            <person name="King L."/>
            <person name="Bahret A."/>
            <person name="Miller B."/>
            <person name="Marra M.A."/>
            <person name="Martienssen R."/>
            <person name="McCombie W.R."/>
            <person name="Wilson R.K."/>
            <person name="Murphy G."/>
            <person name="Bancroft I."/>
            <person name="Volckaert G."/>
            <person name="Wambutt R."/>
            <person name="Duesterhoeft A."/>
            <person name="Stiekema W."/>
            <person name="Pohl T."/>
            <person name="Entian K.-D."/>
            <person name="Terryn N."/>
            <person name="Hartley N."/>
            <person name="Bent E."/>
            <person name="Johnson S."/>
            <person name="Langham S.-A."/>
            <person name="McCullagh B."/>
            <person name="Robben J."/>
            <person name="Grymonprez B."/>
            <person name="Zimmermann W."/>
            <person name="Ramsperger U."/>
            <person name="Wedler H."/>
            <person name="Balke K."/>
            <person name="Wedler E."/>
            <person name="Peters S."/>
            <person name="van Staveren M."/>
            <person name="Dirkse W."/>
            <person name="Mooijman P."/>
            <person name="Klein Lankhorst R."/>
            <person name="Weitzenegger T."/>
            <person name="Bothe G."/>
            <person name="Rose M."/>
            <person name="Hauf J."/>
            <person name="Berneiser S."/>
            <person name="Hempel S."/>
            <person name="Feldpausch M."/>
            <person name="Lamberth S."/>
            <person name="Villarroel R."/>
            <person name="Gielen J."/>
            <person name="Ardiles W."/>
            <person name="Bents O."/>
            <person name="Lemcke K."/>
            <person name="Kolesov G."/>
            <person name="Mayer K.F.X."/>
            <person name="Rudd S."/>
            <person name="Schoof H."/>
            <person name="Schueller C."/>
            <person name="Zaccaria P."/>
            <person name="Mewes H.-W."/>
            <person name="Bevan M."/>
            <person name="Fransz P.F."/>
        </authorList>
    </citation>
    <scope>NUCLEOTIDE SEQUENCE [LARGE SCALE GENOMIC DNA]</scope>
    <source>
        <strain>cv. Columbia</strain>
    </source>
</reference>
<reference key="2">
    <citation type="journal article" date="2017" name="Plant J.">
        <title>Araport11: a complete reannotation of the Arabidopsis thaliana reference genome.</title>
        <authorList>
            <person name="Cheng C.Y."/>
            <person name="Krishnakumar V."/>
            <person name="Chan A.P."/>
            <person name="Thibaud-Nissen F."/>
            <person name="Schobel S."/>
            <person name="Town C.D."/>
        </authorList>
    </citation>
    <scope>GENOME REANNOTATION</scope>
    <source>
        <strain>cv. Columbia</strain>
    </source>
</reference>
<evidence type="ECO:0000250" key="1"/>
<evidence type="ECO:0000255" key="2"/>
<evidence type="ECO:0000305" key="3"/>
<accession>P58045</accession>
<name>C71AE_ARATH</name>
<keyword id="KW-0349">Heme</keyword>
<keyword id="KW-0408">Iron</keyword>
<keyword id="KW-0472">Membrane</keyword>
<keyword id="KW-0479">Metal-binding</keyword>
<keyword id="KW-0503">Monooxygenase</keyword>
<keyword id="KW-0560">Oxidoreductase</keyword>
<keyword id="KW-1185">Reference proteome</keyword>
<keyword id="KW-0812">Transmembrane</keyword>
<keyword id="KW-1133">Transmembrane helix</keyword>
<sequence length="497" mass="56846">MEMIIISLCLATILALLLLKQFLNRTYTAKVNLPPSPWRVPVIGNLHQLSLHPHRSLRSLSHRYGPLMLLHFGRVPVLVVSSSDVAHDLMKTHDLKVANRPQLKVVEKIFNGGREMVFSPYGEYWRQIKSVCIVNLLNKKKVQSFEKVREEEISEMMERVEKASSDSSPLNLSELLLTLTSDVTSRVSLGRKYSKEESMSDFKIQMRKITELVGGFPVGEYIPCLAWIDKLRGVDEKAEEVSKAFGDLMEKVLQEHLDATDKPTLDFVDVLLSLERHERNGVQIRRSDIKFLILDMFLAGTETTYALLEWIMTELIRHPECMKKLQDEIRAKATKLILYISEEDVEDMKYLKAVVKEVLRLHPPLPLLVPRELSEDIKLKGYDIAAGTQVIINAWAIQRDTMTWGIDAEEFRPERHLDSLVDFRGTNFEFIPFGSGRRICPGIGFAMALVEVTLANLVNRFNWRMEVQHSGDEYDLAESTGLDVCRKFPLIVFPSPA</sequence>
<comment type="cofactor">
    <cofactor evidence="1">
        <name>heme</name>
        <dbReference type="ChEBI" id="CHEBI:30413"/>
    </cofactor>
</comment>
<comment type="subcellular location">
    <subcellularLocation>
        <location evidence="3">Membrane</location>
        <topology evidence="3">Single-pass membrane protein</topology>
    </subcellularLocation>
</comment>
<comment type="similarity">
    <text evidence="3">Belongs to the cytochrome P450 family.</text>
</comment>
<proteinExistence type="evidence at transcript level"/>
<protein>
    <recommendedName>
        <fullName>Cytochrome P450 71A14</fullName>
        <ecNumber>1.14.-.-</ecNumber>
    </recommendedName>
</protein>
<gene>
    <name type="primary">CYP71A14</name>
    <name type="ordered locus">At5g24960</name>
    <name type="ORF">F6A4_170</name>
</gene>
<organism>
    <name type="scientific">Arabidopsis thaliana</name>
    <name type="common">Mouse-ear cress</name>
    <dbReference type="NCBI Taxonomy" id="3702"/>
    <lineage>
        <taxon>Eukaryota</taxon>
        <taxon>Viridiplantae</taxon>
        <taxon>Streptophyta</taxon>
        <taxon>Embryophyta</taxon>
        <taxon>Tracheophyta</taxon>
        <taxon>Spermatophyta</taxon>
        <taxon>Magnoliopsida</taxon>
        <taxon>eudicotyledons</taxon>
        <taxon>Gunneridae</taxon>
        <taxon>Pentapetalae</taxon>
        <taxon>rosids</taxon>
        <taxon>malvids</taxon>
        <taxon>Brassicales</taxon>
        <taxon>Brassicaceae</taxon>
        <taxon>Camelineae</taxon>
        <taxon>Arabidopsis</taxon>
    </lineage>
</organism>
<feature type="chain" id="PRO_0000052065" description="Cytochrome P450 71A14">
    <location>
        <begin position="1"/>
        <end position="497"/>
    </location>
</feature>
<feature type="transmembrane region" description="Helical" evidence="2">
    <location>
        <begin position="3"/>
        <end position="23"/>
    </location>
</feature>
<feature type="binding site" description="axial binding residue" evidence="1">
    <location>
        <position position="440"/>
    </location>
    <ligand>
        <name>heme</name>
        <dbReference type="ChEBI" id="CHEBI:30413"/>
    </ligand>
    <ligandPart>
        <name>Fe</name>
        <dbReference type="ChEBI" id="CHEBI:18248"/>
    </ligandPart>
</feature>
<dbReference type="EC" id="1.14.-.-"/>
<dbReference type="EMBL" id="AF069716">
    <property type="status" value="NOT_ANNOTATED_CDS"/>
    <property type="molecule type" value="Genomic_DNA"/>
</dbReference>
<dbReference type="EMBL" id="CP002688">
    <property type="protein sequence ID" value="AED93382.1"/>
    <property type="molecule type" value="Genomic_DNA"/>
</dbReference>
<dbReference type="RefSeq" id="NP_197878.1">
    <property type="nucleotide sequence ID" value="NM_122405.2"/>
</dbReference>
<dbReference type="SMR" id="P58045"/>
<dbReference type="FunCoup" id="P58045">
    <property type="interactions" value="231"/>
</dbReference>
<dbReference type="iPTMnet" id="P58045"/>
<dbReference type="PaxDb" id="3702-AT5G24960.1"/>
<dbReference type="ProteomicsDB" id="222827"/>
<dbReference type="EnsemblPlants" id="AT5G24960.1">
    <property type="protein sequence ID" value="AT5G24960.1"/>
    <property type="gene ID" value="AT5G24960"/>
</dbReference>
<dbReference type="GeneID" id="832566"/>
<dbReference type="Gramene" id="AT5G24960.1">
    <property type="protein sequence ID" value="AT5G24960.1"/>
    <property type="gene ID" value="AT5G24960"/>
</dbReference>
<dbReference type="KEGG" id="ath:AT5G24960"/>
<dbReference type="Araport" id="AT5G24960"/>
<dbReference type="TAIR" id="AT5G24960">
    <property type="gene designation" value="CYP71A14"/>
</dbReference>
<dbReference type="eggNOG" id="KOG0156">
    <property type="taxonomic scope" value="Eukaryota"/>
</dbReference>
<dbReference type="HOGENOM" id="CLU_001570_4_1_1"/>
<dbReference type="InParanoid" id="P58045"/>
<dbReference type="OMA" id="HHECMKK"/>
<dbReference type="PhylomeDB" id="P58045"/>
<dbReference type="PRO" id="PR:P58045"/>
<dbReference type="Proteomes" id="UP000006548">
    <property type="component" value="Chromosome 5"/>
</dbReference>
<dbReference type="ExpressionAtlas" id="P58045">
    <property type="expression patterns" value="baseline and differential"/>
</dbReference>
<dbReference type="GO" id="GO:0016020">
    <property type="term" value="C:membrane"/>
    <property type="evidence" value="ECO:0007669"/>
    <property type="project" value="UniProtKB-SubCell"/>
</dbReference>
<dbReference type="GO" id="GO:0020037">
    <property type="term" value="F:heme binding"/>
    <property type="evidence" value="ECO:0007669"/>
    <property type="project" value="InterPro"/>
</dbReference>
<dbReference type="GO" id="GO:0005506">
    <property type="term" value="F:iron ion binding"/>
    <property type="evidence" value="ECO:0007669"/>
    <property type="project" value="InterPro"/>
</dbReference>
<dbReference type="GO" id="GO:0004497">
    <property type="term" value="F:monooxygenase activity"/>
    <property type="evidence" value="ECO:0007669"/>
    <property type="project" value="UniProtKB-KW"/>
</dbReference>
<dbReference type="GO" id="GO:0016705">
    <property type="term" value="F:oxidoreductase activity, acting on paired donors, with incorporation or reduction of molecular oxygen"/>
    <property type="evidence" value="ECO:0007669"/>
    <property type="project" value="InterPro"/>
</dbReference>
<dbReference type="CDD" id="cd11072">
    <property type="entry name" value="CYP71-like"/>
    <property type="match status" value="1"/>
</dbReference>
<dbReference type="FunFam" id="1.10.630.10:FF:000011">
    <property type="entry name" value="Cytochrome P450 83B1"/>
    <property type="match status" value="1"/>
</dbReference>
<dbReference type="Gene3D" id="1.10.630.10">
    <property type="entry name" value="Cytochrome P450"/>
    <property type="match status" value="1"/>
</dbReference>
<dbReference type="InterPro" id="IPR001128">
    <property type="entry name" value="Cyt_P450"/>
</dbReference>
<dbReference type="InterPro" id="IPR017972">
    <property type="entry name" value="Cyt_P450_CS"/>
</dbReference>
<dbReference type="InterPro" id="IPR002401">
    <property type="entry name" value="Cyt_P450_E_grp-I"/>
</dbReference>
<dbReference type="InterPro" id="IPR036396">
    <property type="entry name" value="Cyt_P450_sf"/>
</dbReference>
<dbReference type="PANTHER" id="PTHR47955:SF15">
    <property type="entry name" value="CYTOCHROME P450 71A2-LIKE"/>
    <property type="match status" value="1"/>
</dbReference>
<dbReference type="PANTHER" id="PTHR47955">
    <property type="entry name" value="CYTOCHROME P450 FAMILY 71 PROTEIN"/>
    <property type="match status" value="1"/>
</dbReference>
<dbReference type="Pfam" id="PF00067">
    <property type="entry name" value="p450"/>
    <property type="match status" value="1"/>
</dbReference>
<dbReference type="PRINTS" id="PR00463">
    <property type="entry name" value="EP450I"/>
</dbReference>
<dbReference type="PRINTS" id="PR00385">
    <property type="entry name" value="P450"/>
</dbReference>
<dbReference type="SUPFAM" id="SSF48264">
    <property type="entry name" value="Cytochrome P450"/>
    <property type="match status" value="1"/>
</dbReference>
<dbReference type="PROSITE" id="PS00086">
    <property type="entry name" value="CYTOCHROME_P450"/>
    <property type="match status" value="1"/>
</dbReference>